<accession>A7TQ35</accession>
<organism>
    <name type="scientific">Vanderwaltozyma polyspora (strain ATCC 22028 / DSM 70294 / BCRC 21397 / CBS 2163 / NBRC 10782 / NRRL Y-8283 / UCD 57-17)</name>
    <name type="common">Kluyveromyces polysporus</name>
    <dbReference type="NCBI Taxonomy" id="436907"/>
    <lineage>
        <taxon>Eukaryota</taxon>
        <taxon>Fungi</taxon>
        <taxon>Dikarya</taxon>
        <taxon>Ascomycota</taxon>
        <taxon>Saccharomycotina</taxon>
        <taxon>Saccharomycetes</taxon>
        <taxon>Saccharomycetales</taxon>
        <taxon>Saccharomycetaceae</taxon>
        <taxon>Vanderwaltozyma</taxon>
    </lineage>
</organism>
<reference key="1">
    <citation type="journal article" date="2007" name="Proc. Natl. Acad. Sci. U.S.A.">
        <title>Independent sorting-out of thousands of duplicated gene pairs in two yeast species descended from a whole-genome duplication.</title>
        <authorList>
            <person name="Scannell D.R."/>
            <person name="Frank A.C."/>
            <person name="Conant G.C."/>
            <person name="Byrne K.P."/>
            <person name="Woolfit M."/>
            <person name="Wolfe K.H."/>
        </authorList>
    </citation>
    <scope>NUCLEOTIDE SEQUENCE [LARGE SCALE GENOMIC DNA]</scope>
    <source>
        <strain>ATCC 22028 / DSM 70294 / BCRC 21397 / CBS 2163 / NBRC 10782 / NRRL Y-8283 / UCD 57-17</strain>
    </source>
</reference>
<sequence length="276" mass="31853">MFEKLAVLKVKLGDRHSDIVLRDIQLWRKPLDGDNDNGLDRSISNVKEINYLKGEFLQYIDINKIPLWLRSSEHFSNLLICFTTSTTTNAFFESKLKYINRGIVIEVNSAAAAAAANNYQHRYLIFYKNGHNVEFIPIDLSLKELFDNKIASLNADTENVTEGKEKKKSSSIDKILMQSQKKVFVQTNKVMESLQISEKRQKFNETLSKLILSGLRLRGIPNTQSGFQKIYKMTFDTTEFAHREELVKLSHNTIHEIPFEDIQETVETLLKLFTKS</sequence>
<proteinExistence type="inferred from homology"/>
<comment type="function">
    <text evidence="1">Required for the proper initiation of DNA replication. Required for mitochondrial morphology (By similarity).</text>
</comment>
<comment type="subcellular location">
    <subcellularLocation>
        <location evidence="1">Nucleus</location>
    </subcellularLocation>
    <subcellularLocation>
        <location evidence="1">Cytoplasm</location>
        <location evidence="1">Cytoskeleton</location>
        <location evidence="1">Spindle pole</location>
    </subcellularLocation>
</comment>
<comment type="similarity">
    <text evidence="2">Belongs to the SLD7 family.</text>
</comment>
<name>SLD7_VANPO</name>
<keyword id="KW-0131">Cell cycle</keyword>
<keyword id="KW-0963">Cytoplasm</keyword>
<keyword id="KW-0206">Cytoskeleton</keyword>
<keyword id="KW-0235">DNA replication</keyword>
<keyword id="KW-0539">Nucleus</keyword>
<keyword id="KW-1185">Reference proteome</keyword>
<gene>
    <name type="primary">SLD7</name>
    <name type="ORF">Kpol_489p21</name>
</gene>
<evidence type="ECO:0000250" key="1"/>
<evidence type="ECO:0000305" key="2"/>
<protein>
    <recommendedName>
        <fullName>Mitochondrial morphogenesis protein SLD7</fullName>
    </recommendedName>
</protein>
<feature type="chain" id="PRO_0000411028" description="Mitochondrial morphogenesis protein SLD7">
    <location>
        <begin position="1"/>
        <end position="276"/>
    </location>
</feature>
<dbReference type="EMBL" id="DS480451">
    <property type="protein sequence ID" value="EDO15640.1"/>
    <property type="molecule type" value="Genomic_DNA"/>
</dbReference>
<dbReference type="RefSeq" id="XP_001643498.1">
    <property type="nucleotide sequence ID" value="XM_001643448.1"/>
</dbReference>
<dbReference type="SMR" id="A7TQ35"/>
<dbReference type="FunCoup" id="A7TQ35">
    <property type="interactions" value="17"/>
</dbReference>
<dbReference type="STRING" id="436907.A7TQ35"/>
<dbReference type="GeneID" id="5543734"/>
<dbReference type="KEGG" id="vpo:Kpol_489p21"/>
<dbReference type="eggNOG" id="ENOG502RZIJ">
    <property type="taxonomic scope" value="Eukaryota"/>
</dbReference>
<dbReference type="HOGENOM" id="CLU_072105_0_0_1"/>
<dbReference type="InParanoid" id="A7TQ35"/>
<dbReference type="OMA" id="EFTHRDE"/>
<dbReference type="OrthoDB" id="4063051at2759"/>
<dbReference type="PhylomeDB" id="A7TQ35"/>
<dbReference type="Proteomes" id="UP000000267">
    <property type="component" value="Unassembled WGS sequence"/>
</dbReference>
<dbReference type="GO" id="GO:0000775">
    <property type="term" value="C:chromosome, centromeric region"/>
    <property type="evidence" value="ECO:0007669"/>
    <property type="project" value="EnsemblFungi"/>
</dbReference>
<dbReference type="GO" id="GO:0005737">
    <property type="term" value="C:cytoplasm"/>
    <property type="evidence" value="ECO:0007669"/>
    <property type="project" value="UniProtKB-KW"/>
</dbReference>
<dbReference type="GO" id="GO:0031261">
    <property type="term" value="C:DNA replication preinitiation complex"/>
    <property type="evidence" value="ECO:0007669"/>
    <property type="project" value="EnsemblFungi"/>
</dbReference>
<dbReference type="GO" id="GO:0000922">
    <property type="term" value="C:spindle pole"/>
    <property type="evidence" value="ECO:0007669"/>
    <property type="project" value="UniProtKB-SubCell"/>
</dbReference>
<dbReference type="GO" id="GO:0006260">
    <property type="term" value="P:DNA replication"/>
    <property type="evidence" value="ECO:0007669"/>
    <property type="project" value="UniProtKB-KW"/>
</dbReference>
<dbReference type="GO" id="GO:0030174">
    <property type="term" value="P:regulation of DNA-templated DNA replication initiation"/>
    <property type="evidence" value="ECO:0007669"/>
    <property type="project" value="EnsemblFungi"/>
</dbReference>
<dbReference type="InterPro" id="IPR041260">
    <property type="entry name" value="Sld7_C"/>
</dbReference>
<dbReference type="InterPro" id="IPR041564">
    <property type="entry name" value="Sld7_N"/>
</dbReference>
<dbReference type="Pfam" id="PF18596">
    <property type="entry name" value="Sld7_C"/>
    <property type="match status" value="1"/>
</dbReference>
<dbReference type="Pfam" id="PF18636">
    <property type="entry name" value="Sld7_N"/>
    <property type="match status" value="1"/>
</dbReference>